<feature type="chain" id="PRO_0000225807" description="UPF0145 protein BCE33L0904">
    <location>
        <begin position="1"/>
        <end position="103"/>
    </location>
</feature>
<feature type="strand" evidence="2">
    <location>
        <begin position="5"/>
        <end position="8"/>
    </location>
</feature>
<feature type="strand" evidence="2">
    <location>
        <begin position="15"/>
        <end position="27"/>
    </location>
</feature>
<feature type="helix" evidence="2">
    <location>
        <begin position="29"/>
        <end position="36"/>
    </location>
</feature>
<feature type="strand" evidence="2">
    <location>
        <begin position="41"/>
        <end position="44"/>
    </location>
</feature>
<feature type="turn" evidence="2">
    <location>
        <begin position="45"/>
        <end position="47"/>
    </location>
</feature>
<feature type="helix" evidence="2">
    <location>
        <begin position="51"/>
        <end position="71"/>
    </location>
</feature>
<feature type="strand" evidence="2">
    <location>
        <begin position="75"/>
        <end position="86"/>
    </location>
</feature>
<feature type="strand" evidence="2">
    <location>
        <begin position="88"/>
        <end position="90"/>
    </location>
</feature>
<feature type="strand" evidence="2">
    <location>
        <begin position="92"/>
        <end position="102"/>
    </location>
</feature>
<accession>Q63F05</accession>
<protein>
    <recommendedName>
        <fullName evidence="1">UPF0145 protein BCE33L0904</fullName>
    </recommendedName>
</protein>
<gene>
    <name type="ordered locus">BCE33L0904</name>
</gene>
<proteinExistence type="evidence at protein level"/>
<evidence type="ECO:0000255" key="1">
    <source>
        <dbReference type="HAMAP-Rule" id="MF_00338"/>
    </source>
</evidence>
<evidence type="ECO:0007829" key="2">
    <source>
        <dbReference type="PDB" id="2GTC"/>
    </source>
</evidence>
<reference key="1">
    <citation type="journal article" date="2006" name="J. Bacteriol.">
        <title>Pathogenomic sequence analysis of Bacillus cereus and Bacillus thuringiensis isolates closely related to Bacillus anthracis.</title>
        <authorList>
            <person name="Han C.S."/>
            <person name="Xie G."/>
            <person name="Challacombe J.F."/>
            <person name="Altherr M.R."/>
            <person name="Bhotika S.S."/>
            <person name="Bruce D."/>
            <person name="Campbell C.S."/>
            <person name="Campbell M.L."/>
            <person name="Chen J."/>
            <person name="Chertkov O."/>
            <person name="Cleland C."/>
            <person name="Dimitrijevic M."/>
            <person name="Doggett N.A."/>
            <person name="Fawcett J.J."/>
            <person name="Glavina T."/>
            <person name="Goodwin L.A."/>
            <person name="Hill K.K."/>
            <person name="Hitchcock P."/>
            <person name="Jackson P.J."/>
            <person name="Keim P."/>
            <person name="Kewalramani A.R."/>
            <person name="Longmire J."/>
            <person name="Lucas S."/>
            <person name="Malfatti S."/>
            <person name="McMurry K."/>
            <person name="Meincke L.J."/>
            <person name="Misra M."/>
            <person name="Moseman B.L."/>
            <person name="Mundt M."/>
            <person name="Munk A.C."/>
            <person name="Okinaka R.T."/>
            <person name="Parson-Quintana B."/>
            <person name="Reilly L.P."/>
            <person name="Richardson P."/>
            <person name="Robinson D.L."/>
            <person name="Rubin E."/>
            <person name="Saunders E."/>
            <person name="Tapia R."/>
            <person name="Tesmer J.G."/>
            <person name="Thayer N."/>
            <person name="Thompson L.S."/>
            <person name="Tice H."/>
            <person name="Ticknor L.O."/>
            <person name="Wills P.L."/>
            <person name="Brettin T.S."/>
            <person name="Gilna P."/>
        </authorList>
    </citation>
    <scope>NUCLEOTIDE SEQUENCE [LARGE SCALE GENOMIC DNA]</scope>
    <source>
        <strain>ZK / E33L</strain>
    </source>
</reference>
<name>Y904_BACCZ</name>
<sequence>MIVTTTSGIQGKEIIEYIDIVNGEAIMGANIVRDLFASVRDVVGGRAGSYESKLKEARDIAMDEMKELAKQKGANAIVGVDVDYEVVRDGMLMVAVSGTAVRI</sequence>
<comment type="similarity">
    <text evidence="1">Belongs to the UPF0145 family.</text>
</comment>
<dbReference type="EMBL" id="CP000001">
    <property type="protein sequence ID" value="AAU19339.1"/>
    <property type="molecule type" value="Genomic_DNA"/>
</dbReference>
<dbReference type="RefSeq" id="WP_000637511.1">
    <property type="nucleotide sequence ID" value="NZ_CP009968.1"/>
</dbReference>
<dbReference type="PDB" id="2GTC">
    <property type="method" value="X-ray"/>
    <property type="resolution" value="2.30 A"/>
    <property type="chains" value="A/B/C/D/E=1-103"/>
</dbReference>
<dbReference type="PDBsum" id="2GTC"/>
<dbReference type="SMR" id="Q63F05"/>
<dbReference type="KEGG" id="bcz:BCE33L0904"/>
<dbReference type="PATRIC" id="fig|288681.22.peg.4668"/>
<dbReference type="EvolutionaryTrace" id="Q63F05"/>
<dbReference type="Proteomes" id="UP000002612">
    <property type="component" value="Chromosome"/>
</dbReference>
<dbReference type="Gene3D" id="3.30.110.70">
    <property type="entry name" value="Hypothetical protein apc22750. Chain B"/>
    <property type="match status" value="1"/>
</dbReference>
<dbReference type="HAMAP" id="MF_00338">
    <property type="entry name" value="UPF0145"/>
    <property type="match status" value="1"/>
</dbReference>
<dbReference type="InterPro" id="IPR035439">
    <property type="entry name" value="UPF0145_dom_sf"/>
</dbReference>
<dbReference type="InterPro" id="IPR002765">
    <property type="entry name" value="UPF0145_YbjQ-like"/>
</dbReference>
<dbReference type="NCBIfam" id="NF009495">
    <property type="entry name" value="PRK12855.1"/>
    <property type="match status" value="1"/>
</dbReference>
<dbReference type="NCBIfam" id="NF009496">
    <property type="entry name" value="PRK12856.1"/>
    <property type="match status" value="1"/>
</dbReference>
<dbReference type="PANTHER" id="PTHR34068">
    <property type="entry name" value="UPF0145 PROTEIN YBJQ"/>
    <property type="match status" value="1"/>
</dbReference>
<dbReference type="PANTHER" id="PTHR34068:SF1">
    <property type="entry name" value="UPF0145 PROTEIN YBJQ"/>
    <property type="match status" value="1"/>
</dbReference>
<dbReference type="Pfam" id="PF01906">
    <property type="entry name" value="YbjQ_1"/>
    <property type="match status" value="1"/>
</dbReference>
<dbReference type="SUPFAM" id="SSF117782">
    <property type="entry name" value="YbjQ-like"/>
    <property type="match status" value="1"/>
</dbReference>
<organism>
    <name type="scientific">Bacillus cereus (strain ZK / E33L)</name>
    <dbReference type="NCBI Taxonomy" id="288681"/>
    <lineage>
        <taxon>Bacteria</taxon>
        <taxon>Bacillati</taxon>
        <taxon>Bacillota</taxon>
        <taxon>Bacilli</taxon>
        <taxon>Bacillales</taxon>
        <taxon>Bacillaceae</taxon>
        <taxon>Bacillus</taxon>
        <taxon>Bacillus cereus group</taxon>
    </lineage>
</organism>
<keyword id="KW-0002">3D-structure</keyword>